<feature type="chain" id="PRO_0000340394" description="DNA ligase">
    <location>
        <begin position="1"/>
        <end position="669"/>
    </location>
</feature>
<feature type="domain" description="BRCT" evidence="1">
    <location>
        <begin position="592"/>
        <end position="669"/>
    </location>
</feature>
<feature type="active site" description="N6-AMP-lysine intermediate" evidence="1">
    <location>
        <position position="115"/>
    </location>
</feature>
<feature type="binding site" evidence="1">
    <location>
        <begin position="32"/>
        <end position="36"/>
    </location>
    <ligand>
        <name>NAD(+)</name>
        <dbReference type="ChEBI" id="CHEBI:57540"/>
    </ligand>
</feature>
<feature type="binding site" evidence="1">
    <location>
        <begin position="81"/>
        <end position="82"/>
    </location>
    <ligand>
        <name>NAD(+)</name>
        <dbReference type="ChEBI" id="CHEBI:57540"/>
    </ligand>
</feature>
<feature type="binding site" evidence="1">
    <location>
        <position position="113"/>
    </location>
    <ligand>
        <name>NAD(+)</name>
        <dbReference type="ChEBI" id="CHEBI:57540"/>
    </ligand>
</feature>
<feature type="binding site" evidence="1">
    <location>
        <position position="136"/>
    </location>
    <ligand>
        <name>NAD(+)</name>
        <dbReference type="ChEBI" id="CHEBI:57540"/>
    </ligand>
</feature>
<feature type="binding site" evidence="1">
    <location>
        <position position="173"/>
    </location>
    <ligand>
        <name>NAD(+)</name>
        <dbReference type="ChEBI" id="CHEBI:57540"/>
    </ligand>
</feature>
<feature type="binding site" evidence="1">
    <location>
        <position position="290"/>
    </location>
    <ligand>
        <name>NAD(+)</name>
        <dbReference type="ChEBI" id="CHEBI:57540"/>
    </ligand>
</feature>
<feature type="binding site" evidence="1">
    <location>
        <position position="314"/>
    </location>
    <ligand>
        <name>NAD(+)</name>
        <dbReference type="ChEBI" id="CHEBI:57540"/>
    </ligand>
</feature>
<feature type="binding site" evidence="1">
    <location>
        <position position="408"/>
    </location>
    <ligand>
        <name>Zn(2+)</name>
        <dbReference type="ChEBI" id="CHEBI:29105"/>
    </ligand>
</feature>
<feature type="binding site" evidence="1">
    <location>
        <position position="411"/>
    </location>
    <ligand>
        <name>Zn(2+)</name>
        <dbReference type="ChEBI" id="CHEBI:29105"/>
    </ligand>
</feature>
<feature type="binding site" evidence="1">
    <location>
        <position position="426"/>
    </location>
    <ligand>
        <name>Zn(2+)</name>
        <dbReference type="ChEBI" id="CHEBI:29105"/>
    </ligand>
</feature>
<feature type="binding site" evidence="1">
    <location>
        <position position="432"/>
    </location>
    <ligand>
        <name>Zn(2+)</name>
        <dbReference type="ChEBI" id="CHEBI:29105"/>
    </ligand>
</feature>
<name>DNLJ_VIBC3</name>
<reference key="1">
    <citation type="submission" date="2007-03" db="EMBL/GenBank/DDBJ databases">
        <authorList>
            <person name="Heidelberg J."/>
        </authorList>
    </citation>
    <scope>NUCLEOTIDE SEQUENCE [LARGE SCALE GENOMIC DNA]</scope>
    <source>
        <strain>ATCC 39541 / Classical Ogawa 395 / O395</strain>
    </source>
</reference>
<reference key="2">
    <citation type="journal article" date="2008" name="PLoS ONE">
        <title>A recalibrated molecular clock and independent origins for the cholera pandemic clones.</title>
        <authorList>
            <person name="Feng L."/>
            <person name="Reeves P.R."/>
            <person name="Lan R."/>
            <person name="Ren Y."/>
            <person name="Gao C."/>
            <person name="Zhou Z."/>
            <person name="Ren Y."/>
            <person name="Cheng J."/>
            <person name="Wang W."/>
            <person name="Wang J."/>
            <person name="Qian W."/>
            <person name="Li D."/>
            <person name="Wang L."/>
        </authorList>
    </citation>
    <scope>NUCLEOTIDE SEQUENCE [LARGE SCALE GENOMIC DNA]</scope>
    <source>
        <strain>ATCC 39541 / Classical Ogawa 395 / O395</strain>
    </source>
</reference>
<accession>A5F2W3</accession>
<accession>C3LYY2</accession>
<keyword id="KW-0227">DNA damage</keyword>
<keyword id="KW-0234">DNA repair</keyword>
<keyword id="KW-0235">DNA replication</keyword>
<keyword id="KW-0436">Ligase</keyword>
<keyword id="KW-0460">Magnesium</keyword>
<keyword id="KW-0464">Manganese</keyword>
<keyword id="KW-0479">Metal-binding</keyword>
<keyword id="KW-0520">NAD</keyword>
<keyword id="KW-0862">Zinc</keyword>
<proteinExistence type="inferred from homology"/>
<organism>
    <name type="scientific">Vibrio cholerae serotype O1 (strain ATCC 39541 / Classical Ogawa 395 / O395)</name>
    <dbReference type="NCBI Taxonomy" id="345073"/>
    <lineage>
        <taxon>Bacteria</taxon>
        <taxon>Pseudomonadati</taxon>
        <taxon>Pseudomonadota</taxon>
        <taxon>Gammaproteobacteria</taxon>
        <taxon>Vibrionales</taxon>
        <taxon>Vibrionaceae</taxon>
        <taxon>Vibrio</taxon>
    </lineage>
</organism>
<dbReference type="EC" id="6.5.1.2" evidence="1"/>
<dbReference type="EMBL" id="CP000627">
    <property type="protein sequence ID" value="ABQ22115.1"/>
    <property type="molecule type" value="Genomic_DNA"/>
</dbReference>
<dbReference type="EMBL" id="CP001235">
    <property type="protein sequence ID" value="ACP08998.1"/>
    <property type="molecule type" value="Genomic_DNA"/>
</dbReference>
<dbReference type="RefSeq" id="WP_001286046.1">
    <property type="nucleotide sequence ID" value="NZ_JAACZH010000005.1"/>
</dbReference>
<dbReference type="SMR" id="A5F2W3"/>
<dbReference type="KEGG" id="vco:VC0395_A0492"/>
<dbReference type="KEGG" id="vcr:VC395_0986"/>
<dbReference type="PATRIC" id="fig|345073.21.peg.955"/>
<dbReference type="eggNOG" id="COG0272">
    <property type="taxonomic scope" value="Bacteria"/>
</dbReference>
<dbReference type="HOGENOM" id="CLU_007764_2_1_6"/>
<dbReference type="OrthoDB" id="9759736at2"/>
<dbReference type="Proteomes" id="UP000000249">
    <property type="component" value="Chromosome 2"/>
</dbReference>
<dbReference type="GO" id="GO:0005829">
    <property type="term" value="C:cytosol"/>
    <property type="evidence" value="ECO:0007669"/>
    <property type="project" value="TreeGrafter"/>
</dbReference>
<dbReference type="GO" id="GO:0003677">
    <property type="term" value="F:DNA binding"/>
    <property type="evidence" value="ECO:0007669"/>
    <property type="project" value="InterPro"/>
</dbReference>
<dbReference type="GO" id="GO:0003911">
    <property type="term" value="F:DNA ligase (NAD+) activity"/>
    <property type="evidence" value="ECO:0007669"/>
    <property type="project" value="UniProtKB-UniRule"/>
</dbReference>
<dbReference type="GO" id="GO:0046872">
    <property type="term" value="F:metal ion binding"/>
    <property type="evidence" value="ECO:0007669"/>
    <property type="project" value="UniProtKB-KW"/>
</dbReference>
<dbReference type="GO" id="GO:0006281">
    <property type="term" value="P:DNA repair"/>
    <property type="evidence" value="ECO:0007669"/>
    <property type="project" value="UniProtKB-KW"/>
</dbReference>
<dbReference type="GO" id="GO:0006260">
    <property type="term" value="P:DNA replication"/>
    <property type="evidence" value="ECO:0007669"/>
    <property type="project" value="UniProtKB-KW"/>
</dbReference>
<dbReference type="CDD" id="cd17748">
    <property type="entry name" value="BRCT_DNA_ligase_like"/>
    <property type="match status" value="1"/>
</dbReference>
<dbReference type="CDD" id="cd00114">
    <property type="entry name" value="LIGANc"/>
    <property type="match status" value="1"/>
</dbReference>
<dbReference type="FunFam" id="1.10.150.20:FF:000006">
    <property type="entry name" value="DNA ligase"/>
    <property type="match status" value="1"/>
</dbReference>
<dbReference type="FunFam" id="1.10.150.20:FF:000007">
    <property type="entry name" value="DNA ligase"/>
    <property type="match status" value="1"/>
</dbReference>
<dbReference type="FunFam" id="1.10.287.610:FF:000002">
    <property type="entry name" value="DNA ligase"/>
    <property type="match status" value="1"/>
</dbReference>
<dbReference type="FunFam" id="2.40.50.140:FF:000012">
    <property type="entry name" value="DNA ligase"/>
    <property type="match status" value="1"/>
</dbReference>
<dbReference type="FunFam" id="3.30.470.30:FF:000001">
    <property type="entry name" value="DNA ligase"/>
    <property type="match status" value="1"/>
</dbReference>
<dbReference type="FunFam" id="6.20.10.30:FF:000001">
    <property type="entry name" value="DNA ligase"/>
    <property type="match status" value="1"/>
</dbReference>
<dbReference type="Gene3D" id="6.20.10.30">
    <property type="match status" value="1"/>
</dbReference>
<dbReference type="Gene3D" id="1.10.150.20">
    <property type="entry name" value="5' to 3' exonuclease, C-terminal subdomain"/>
    <property type="match status" value="2"/>
</dbReference>
<dbReference type="Gene3D" id="3.40.50.10190">
    <property type="entry name" value="BRCT domain"/>
    <property type="match status" value="1"/>
</dbReference>
<dbReference type="Gene3D" id="3.30.470.30">
    <property type="entry name" value="DNA ligase/mRNA capping enzyme"/>
    <property type="match status" value="1"/>
</dbReference>
<dbReference type="Gene3D" id="1.10.287.610">
    <property type="entry name" value="Helix hairpin bin"/>
    <property type="match status" value="1"/>
</dbReference>
<dbReference type="Gene3D" id="2.40.50.140">
    <property type="entry name" value="Nucleic acid-binding proteins"/>
    <property type="match status" value="1"/>
</dbReference>
<dbReference type="HAMAP" id="MF_01588">
    <property type="entry name" value="DNA_ligase_A"/>
    <property type="match status" value="1"/>
</dbReference>
<dbReference type="InterPro" id="IPR001357">
    <property type="entry name" value="BRCT_dom"/>
</dbReference>
<dbReference type="InterPro" id="IPR036420">
    <property type="entry name" value="BRCT_dom_sf"/>
</dbReference>
<dbReference type="InterPro" id="IPR041663">
    <property type="entry name" value="DisA/LigA_HHH"/>
</dbReference>
<dbReference type="InterPro" id="IPR001679">
    <property type="entry name" value="DNA_ligase"/>
</dbReference>
<dbReference type="InterPro" id="IPR018239">
    <property type="entry name" value="DNA_ligase_AS"/>
</dbReference>
<dbReference type="InterPro" id="IPR033136">
    <property type="entry name" value="DNA_ligase_CS"/>
</dbReference>
<dbReference type="InterPro" id="IPR013839">
    <property type="entry name" value="DNAligase_adenylation"/>
</dbReference>
<dbReference type="InterPro" id="IPR013840">
    <property type="entry name" value="DNAligase_N"/>
</dbReference>
<dbReference type="InterPro" id="IPR003583">
    <property type="entry name" value="Hlx-hairpin-Hlx_DNA-bd_motif"/>
</dbReference>
<dbReference type="InterPro" id="IPR012340">
    <property type="entry name" value="NA-bd_OB-fold"/>
</dbReference>
<dbReference type="InterPro" id="IPR004150">
    <property type="entry name" value="NAD_DNA_ligase_OB"/>
</dbReference>
<dbReference type="InterPro" id="IPR010994">
    <property type="entry name" value="RuvA_2-like"/>
</dbReference>
<dbReference type="InterPro" id="IPR004149">
    <property type="entry name" value="Znf_DNAligase_C4"/>
</dbReference>
<dbReference type="NCBIfam" id="TIGR00575">
    <property type="entry name" value="dnlj"/>
    <property type="match status" value="1"/>
</dbReference>
<dbReference type="NCBIfam" id="NF005932">
    <property type="entry name" value="PRK07956.1"/>
    <property type="match status" value="1"/>
</dbReference>
<dbReference type="PANTHER" id="PTHR23389">
    <property type="entry name" value="CHROMOSOME TRANSMISSION FIDELITY FACTOR 18"/>
    <property type="match status" value="1"/>
</dbReference>
<dbReference type="PANTHER" id="PTHR23389:SF9">
    <property type="entry name" value="DNA LIGASE"/>
    <property type="match status" value="1"/>
</dbReference>
<dbReference type="Pfam" id="PF00533">
    <property type="entry name" value="BRCT"/>
    <property type="match status" value="1"/>
</dbReference>
<dbReference type="Pfam" id="PF01653">
    <property type="entry name" value="DNA_ligase_aden"/>
    <property type="match status" value="1"/>
</dbReference>
<dbReference type="Pfam" id="PF03120">
    <property type="entry name" value="DNA_ligase_OB"/>
    <property type="match status" value="1"/>
</dbReference>
<dbReference type="Pfam" id="PF03119">
    <property type="entry name" value="DNA_ligase_ZBD"/>
    <property type="match status" value="1"/>
</dbReference>
<dbReference type="Pfam" id="PF12826">
    <property type="entry name" value="HHH_2"/>
    <property type="match status" value="1"/>
</dbReference>
<dbReference type="Pfam" id="PF14520">
    <property type="entry name" value="HHH_5"/>
    <property type="match status" value="1"/>
</dbReference>
<dbReference type="Pfam" id="PF22745">
    <property type="entry name" value="Nlig-Ia"/>
    <property type="match status" value="1"/>
</dbReference>
<dbReference type="PIRSF" id="PIRSF001604">
    <property type="entry name" value="LigA"/>
    <property type="match status" value="1"/>
</dbReference>
<dbReference type="SMART" id="SM00292">
    <property type="entry name" value="BRCT"/>
    <property type="match status" value="1"/>
</dbReference>
<dbReference type="SMART" id="SM00278">
    <property type="entry name" value="HhH1"/>
    <property type="match status" value="4"/>
</dbReference>
<dbReference type="SMART" id="SM00532">
    <property type="entry name" value="LIGANc"/>
    <property type="match status" value="1"/>
</dbReference>
<dbReference type="SUPFAM" id="SSF52113">
    <property type="entry name" value="BRCT domain"/>
    <property type="match status" value="1"/>
</dbReference>
<dbReference type="SUPFAM" id="SSF56091">
    <property type="entry name" value="DNA ligase/mRNA capping enzyme, catalytic domain"/>
    <property type="match status" value="1"/>
</dbReference>
<dbReference type="SUPFAM" id="SSF50249">
    <property type="entry name" value="Nucleic acid-binding proteins"/>
    <property type="match status" value="1"/>
</dbReference>
<dbReference type="SUPFAM" id="SSF47781">
    <property type="entry name" value="RuvA domain 2-like"/>
    <property type="match status" value="1"/>
</dbReference>
<dbReference type="PROSITE" id="PS50172">
    <property type="entry name" value="BRCT"/>
    <property type="match status" value="1"/>
</dbReference>
<dbReference type="PROSITE" id="PS01055">
    <property type="entry name" value="DNA_LIGASE_N1"/>
    <property type="match status" value="1"/>
</dbReference>
<dbReference type="PROSITE" id="PS01056">
    <property type="entry name" value="DNA_LIGASE_N2"/>
    <property type="match status" value="1"/>
</dbReference>
<sequence length="669" mass="73371">MSDVAQRLTELRKTLHEHGVRYYVEDAPTIPDAEYDRLMRELLELEAAHPELMSSDSPSLRVGGRPLDAFESVVHEIPMLSLDNAFDDGELESFYRRMTDRIQAVQHSAFCCEPKLDGLAVSLLYENGVLTRAATRGDGMTGENITENVRTIKAIPLRLQGADFPTRLEVRGEVFMPKAGFEALNARALKKGEKQFVNPRNAAAGSLRQLDSKITAQRPLAFYAYSVGVIEGGELATSHYQRFLQLKGWGLPICPETKLVTSLAEVKAFYQDILQRRQFLAYEIDGVVIKVDDIQLQERLGFVARAPRWAIAYKFPAQEELTLLNDVEFQVGRTGAITPVAKLEPVFVGGVTVSNATLHNADEIERLGVMVGDTVVIRRAGDVIPQIVSVVLERRPENAKSIVFPTRCPVCQSDVERVEGEAVARCSGGLICQAQRKEALKHFVSRKAMDVEGLGDKVIEQLVDREMVSTPADLFRLRAGELTILERMGPKSAQNVIDALNKAKQTTLPKFLYALGIREVGDATALNLAQHFLSLEAIQQASLEQFIEVPDVGVVVASHLLAFFAQDRNQQVINELLEQGITWPALTAAPVAVDSALAGKIVVLTGSFTQLSRNDAKAALQALGAKVTGSVSKNTDIVFAGEAAGSKLAKATELGIQVFDEQALIEFLK</sequence>
<gene>
    <name evidence="1" type="primary">ligA</name>
    <name type="synonym">ligA-1</name>
    <name type="ordered locus">VC0395_A0492</name>
    <name type="ordered locus">VC395_0986</name>
</gene>
<protein>
    <recommendedName>
        <fullName evidence="1">DNA ligase</fullName>
        <ecNumber evidence="1">6.5.1.2</ecNumber>
    </recommendedName>
    <alternativeName>
        <fullName evidence="1">Polydeoxyribonucleotide synthase [NAD(+)]</fullName>
    </alternativeName>
</protein>
<comment type="function">
    <text evidence="1">DNA ligase that catalyzes the formation of phosphodiester linkages between 5'-phosphoryl and 3'-hydroxyl groups in double-stranded DNA using NAD as a coenzyme and as the energy source for the reaction. It is essential for DNA replication and repair of damaged DNA.</text>
</comment>
<comment type="catalytic activity">
    <reaction evidence="1">
        <text>NAD(+) + (deoxyribonucleotide)n-3'-hydroxyl + 5'-phospho-(deoxyribonucleotide)m = (deoxyribonucleotide)n+m + AMP + beta-nicotinamide D-nucleotide.</text>
        <dbReference type="EC" id="6.5.1.2"/>
    </reaction>
</comment>
<comment type="cofactor">
    <cofactor evidence="1">
        <name>Mg(2+)</name>
        <dbReference type="ChEBI" id="CHEBI:18420"/>
    </cofactor>
    <cofactor evidence="1">
        <name>Mn(2+)</name>
        <dbReference type="ChEBI" id="CHEBI:29035"/>
    </cofactor>
</comment>
<comment type="similarity">
    <text evidence="1">Belongs to the NAD-dependent DNA ligase family. LigA subfamily.</text>
</comment>
<evidence type="ECO:0000255" key="1">
    <source>
        <dbReference type="HAMAP-Rule" id="MF_01588"/>
    </source>
</evidence>